<feature type="chain" id="PRO_0000282643" description="BSD domain-containing protein 1-A">
    <location>
        <begin position="1"/>
        <end position="413"/>
    </location>
</feature>
<feature type="domain" description="BSD" evidence="1">
    <location>
        <begin position="146"/>
        <end position="198"/>
    </location>
</feature>
<feature type="region of interest" description="Disordered" evidence="2">
    <location>
        <begin position="208"/>
        <end position="228"/>
    </location>
</feature>
<feature type="region of interest" description="Disordered" evidence="2">
    <location>
        <begin position="255"/>
        <end position="386"/>
    </location>
</feature>
<feature type="compositionally biased region" description="Basic and acidic residues" evidence="2">
    <location>
        <begin position="208"/>
        <end position="219"/>
    </location>
</feature>
<feature type="compositionally biased region" description="Basic and acidic residues" evidence="2">
    <location>
        <begin position="255"/>
        <end position="271"/>
    </location>
</feature>
<feature type="compositionally biased region" description="Low complexity" evidence="2">
    <location>
        <begin position="274"/>
        <end position="287"/>
    </location>
</feature>
<feature type="compositionally biased region" description="Polar residues" evidence="2">
    <location>
        <begin position="297"/>
        <end position="322"/>
    </location>
</feature>
<feature type="compositionally biased region" description="Basic and acidic residues" evidence="2">
    <location>
        <begin position="342"/>
        <end position="352"/>
    </location>
</feature>
<feature type="compositionally biased region" description="Polar residues" evidence="2">
    <location>
        <begin position="356"/>
        <end position="375"/>
    </location>
</feature>
<feature type="compositionally biased region" description="Acidic residues" evidence="2">
    <location>
        <begin position="376"/>
        <end position="386"/>
    </location>
</feature>
<accession>Q6INU2</accession>
<gene>
    <name type="primary">bsdc1-a</name>
</gene>
<organism>
    <name type="scientific">Xenopus laevis</name>
    <name type="common">African clawed frog</name>
    <dbReference type="NCBI Taxonomy" id="8355"/>
    <lineage>
        <taxon>Eukaryota</taxon>
        <taxon>Metazoa</taxon>
        <taxon>Chordata</taxon>
        <taxon>Craniata</taxon>
        <taxon>Vertebrata</taxon>
        <taxon>Euteleostomi</taxon>
        <taxon>Amphibia</taxon>
        <taxon>Batrachia</taxon>
        <taxon>Anura</taxon>
        <taxon>Pipoidea</taxon>
        <taxon>Pipidae</taxon>
        <taxon>Xenopodinae</taxon>
        <taxon>Xenopus</taxon>
        <taxon>Xenopus</taxon>
    </lineage>
</organism>
<sequence length="413" mass="45984">MAEGEDGSWWRSWLQQSYTSVRDKSAETLEFMKRDLTEFSRVVHHDTACTIAATASVVKEKLVVEGSSGTTEKVKKGLSDFLGVISDTFAPSPDKTIDCDVITLMATPSGTTELYDGTKARLYSLQSDPATYCNEPDGFPAEFDAWLAYWDPEQRKAEISELLVTSPSIRALFTKMVPAAVSHSEFWQRYFYKVHQLEQEEARRDALKQRADQSVHSEEPTWEEEEEDFVGAGSAPALKLEEKYVLSTPTIPTLHVEDKSEKTAELNRDHTSFTSPSESSESISPITQIANPEYIEQTPSKEPSPGTLTVTKENTGAGTDETSAPAPLEQKTGKSNTQMATQREDPPSDLRVFELNSDSGKSTPSNNGQKGSSTDISEDWEKEFDMTEEEVQLALSTVEVSGEVEDEDWENWE</sequence>
<proteinExistence type="evidence at transcript level"/>
<protein>
    <recommendedName>
        <fullName>BSD domain-containing protein 1-A</fullName>
    </recommendedName>
</protein>
<name>BSC1A_XENLA</name>
<keyword id="KW-1185">Reference proteome</keyword>
<evidence type="ECO:0000255" key="1">
    <source>
        <dbReference type="PROSITE-ProRule" id="PRU00036"/>
    </source>
</evidence>
<evidence type="ECO:0000256" key="2">
    <source>
        <dbReference type="SAM" id="MobiDB-lite"/>
    </source>
</evidence>
<reference key="1">
    <citation type="submission" date="2004-06" db="EMBL/GenBank/DDBJ databases">
        <authorList>
            <consortium name="NIH - Xenopus Gene Collection (XGC) project"/>
        </authorList>
    </citation>
    <scope>NUCLEOTIDE SEQUENCE [LARGE SCALE MRNA]</scope>
    <source>
        <tissue>Ovary</tissue>
    </source>
</reference>
<dbReference type="EMBL" id="BC072180">
    <property type="protein sequence ID" value="AAH72180.1"/>
    <property type="molecule type" value="mRNA"/>
</dbReference>
<dbReference type="RefSeq" id="NP_001085399.1">
    <property type="nucleotide sequence ID" value="NM_001091930.1"/>
</dbReference>
<dbReference type="DNASU" id="443825"/>
<dbReference type="GeneID" id="443825"/>
<dbReference type="KEGG" id="xla:443825"/>
<dbReference type="AGR" id="Xenbase:XB-GENE-5892100"/>
<dbReference type="CTD" id="443825"/>
<dbReference type="Xenbase" id="XB-GENE-5892100">
    <property type="gene designation" value="bsdc1.L"/>
</dbReference>
<dbReference type="OrthoDB" id="73788at2759"/>
<dbReference type="Proteomes" id="UP000186698">
    <property type="component" value="Chromosome 2L"/>
</dbReference>
<dbReference type="Bgee" id="443825">
    <property type="expression patterns" value="Expressed in testis and 19 other cell types or tissues"/>
</dbReference>
<dbReference type="GO" id="GO:0005737">
    <property type="term" value="C:cytoplasm"/>
    <property type="evidence" value="ECO:0000318"/>
    <property type="project" value="GO_Central"/>
</dbReference>
<dbReference type="Gene3D" id="1.10.3970.10">
    <property type="entry name" value="BSD domain"/>
    <property type="match status" value="1"/>
</dbReference>
<dbReference type="InterPro" id="IPR005607">
    <property type="entry name" value="BSD_dom"/>
</dbReference>
<dbReference type="InterPro" id="IPR035925">
    <property type="entry name" value="BSD_dom_sf"/>
</dbReference>
<dbReference type="InterPro" id="IPR051494">
    <property type="entry name" value="BSD_domain-containing"/>
</dbReference>
<dbReference type="PANTHER" id="PTHR16019:SF5">
    <property type="entry name" value="BSD DOMAIN-CONTAINING PROTEIN 1"/>
    <property type="match status" value="1"/>
</dbReference>
<dbReference type="PANTHER" id="PTHR16019">
    <property type="entry name" value="SYNAPSE-ASSOCIATED PROTEIN"/>
    <property type="match status" value="1"/>
</dbReference>
<dbReference type="Pfam" id="PF03909">
    <property type="entry name" value="BSD"/>
    <property type="match status" value="1"/>
</dbReference>
<dbReference type="SMART" id="SM00751">
    <property type="entry name" value="BSD"/>
    <property type="match status" value="1"/>
</dbReference>
<dbReference type="SUPFAM" id="SSF140383">
    <property type="entry name" value="BSD domain-like"/>
    <property type="match status" value="1"/>
</dbReference>
<dbReference type="PROSITE" id="PS50858">
    <property type="entry name" value="BSD"/>
    <property type="match status" value="1"/>
</dbReference>